<organism>
    <name type="scientific">Drosophila sechellia</name>
    <name type="common">Fruit fly</name>
    <dbReference type="NCBI Taxonomy" id="7238"/>
    <lineage>
        <taxon>Eukaryota</taxon>
        <taxon>Metazoa</taxon>
        <taxon>Ecdysozoa</taxon>
        <taxon>Arthropoda</taxon>
        <taxon>Hexapoda</taxon>
        <taxon>Insecta</taxon>
        <taxon>Pterygota</taxon>
        <taxon>Neoptera</taxon>
        <taxon>Endopterygota</taxon>
        <taxon>Diptera</taxon>
        <taxon>Brachycera</taxon>
        <taxon>Muscomorpha</taxon>
        <taxon>Ephydroidea</taxon>
        <taxon>Drosophilidae</taxon>
        <taxon>Drosophila</taxon>
        <taxon>Sophophora</taxon>
    </lineage>
</organism>
<gene>
    <name type="primary">mt:ATPase8</name>
    <name type="synonym">ATP8</name>
    <name type="synonym">ATPase8</name>
    <name type="synonym">Mtatp8</name>
</gene>
<comment type="function">
    <text evidence="1">Mitochondrial membrane ATP synthase (F(1)F(0) ATP synthase or Complex V) produces ATP from ADP in the presence of a proton gradient across the membrane which is generated by electron transport complexes of the respiratory chain. F-type ATPases consist of two structural domains, F(1) - containing the extramembraneous catalytic core and F(0) - containing the membrane proton channel, linked together by a central stalk and a peripheral stalk. During catalysis, ATP synthesis in the catalytic domain of F(1) is coupled via a rotary mechanism of the central stalk subunits to proton translocation. Part of the complex F(0) domain. Minor subunit located with subunit a in the membrane (By similarity).</text>
</comment>
<comment type="subunit">
    <text evidence="1">F-type ATPases have 2 components, CF(1) - the catalytic core - and CF(0) - the membrane proton channel.</text>
</comment>
<comment type="subcellular location">
    <subcellularLocation>
        <location>Mitochondrion membrane</location>
        <topology>Single-pass membrane protein</topology>
    </subcellularLocation>
</comment>
<comment type="similarity">
    <text evidence="3">Belongs to the ATPase protein 8 family.</text>
</comment>
<proteinExistence type="inferred from homology"/>
<sequence length="53" mass="6334">MPQMAPISWLLLFIIFSITFILFCSINYYSYTPNSPKSNELKNINLNSMNWKW</sequence>
<name>ATP8_DROSE</name>
<protein>
    <recommendedName>
        <fullName>ATP synthase protein 8</fullName>
    </recommendedName>
    <alternativeName>
        <fullName>A6L</fullName>
    </alternativeName>
    <alternativeName>
        <fullName>F-ATPase subunit 8</fullName>
    </alternativeName>
</protein>
<reference key="1">
    <citation type="journal article" date="2000" name="J. Mol. Evol.">
        <title>Comparative genomics of mitochondrial DNA in members of the Drosophila melanogaster subgroup.</title>
        <authorList>
            <person name="Ballard J.W.O."/>
        </authorList>
    </citation>
    <scope>NUCLEOTIDE SEQUENCE [LARGE SCALE GENOMIC DNA]</scope>
    <source>
        <strain evidence="4">Rob3c / Tucson 14021-0248.25</strain>
    </source>
</reference>
<evidence type="ECO:0000250" key="1"/>
<evidence type="ECO:0000255" key="2"/>
<evidence type="ECO:0000305" key="3"/>
<evidence type="ECO:0000312" key="4">
    <source>
        <dbReference type="Proteomes" id="UP000001292"/>
    </source>
</evidence>
<keyword id="KW-0066">ATP synthesis</keyword>
<keyword id="KW-0138">CF(0)</keyword>
<keyword id="KW-0375">Hydrogen ion transport</keyword>
<keyword id="KW-0406">Ion transport</keyword>
<keyword id="KW-0472">Membrane</keyword>
<keyword id="KW-0496">Mitochondrion</keyword>
<keyword id="KW-1185">Reference proteome</keyword>
<keyword id="KW-0812">Transmembrane</keyword>
<keyword id="KW-1133">Transmembrane helix</keyword>
<keyword id="KW-0813">Transport</keyword>
<accession>Q9MGM1</accession>
<dbReference type="EMBL" id="AF200832">
    <property type="protein sequence ID" value="AAF77280.1"/>
    <property type="molecule type" value="Genomic_DNA"/>
</dbReference>
<dbReference type="RefSeq" id="NP_982312.1">
    <property type="nucleotide sequence ID" value="NC_005780.1"/>
</dbReference>
<dbReference type="SMR" id="Q9MGM1"/>
<dbReference type="STRING" id="7238.Q9MGM1"/>
<dbReference type="GeneID" id="2760950"/>
<dbReference type="KEGG" id="dse:2760950"/>
<dbReference type="CTD" id="4509"/>
<dbReference type="Proteomes" id="UP000001292">
    <property type="component" value="Mitochondrion"/>
</dbReference>
<dbReference type="GO" id="GO:0031966">
    <property type="term" value="C:mitochondrial membrane"/>
    <property type="evidence" value="ECO:0007669"/>
    <property type="project" value="UniProtKB-SubCell"/>
</dbReference>
<dbReference type="GO" id="GO:0045259">
    <property type="term" value="C:proton-transporting ATP synthase complex"/>
    <property type="evidence" value="ECO:0007669"/>
    <property type="project" value="UniProtKB-KW"/>
</dbReference>
<dbReference type="GO" id="GO:0015078">
    <property type="term" value="F:proton transmembrane transporter activity"/>
    <property type="evidence" value="ECO:0007669"/>
    <property type="project" value="InterPro"/>
</dbReference>
<dbReference type="GO" id="GO:0015986">
    <property type="term" value="P:proton motive force-driven ATP synthesis"/>
    <property type="evidence" value="ECO:0007669"/>
    <property type="project" value="InterPro"/>
</dbReference>
<dbReference type="InterPro" id="IPR001421">
    <property type="entry name" value="ATP8_metazoa"/>
</dbReference>
<dbReference type="Pfam" id="PF00895">
    <property type="entry name" value="ATP-synt_8"/>
    <property type="match status" value="1"/>
</dbReference>
<geneLocation type="mitochondrion"/>
<feature type="chain" id="PRO_0000195524" description="ATP synthase protein 8">
    <location>
        <begin position="1"/>
        <end position="53"/>
    </location>
</feature>
<feature type="transmembrane region" description="Helical" evidence="2">
    <location>
        <begin position="4"/>
        <end position="24"/>
    </location>
</feature>